<keyword id="KW-0963">Cytoplasm</keyword>
<keyword id="KW-0539">Nucleus</keyword>
<keyword id="KW-1185">Reference proteome</keyword>
<gene>
    <name type="ORF">SPBC1346.03</name>
    <name type="ORF">SPBP19A11.07c</name>
    <name type="ORF">SPBP4H10.02c</name>
</gene>
<reference key="1">
    <citation type="journal article" date="2002" name="Nature">
        <title>The genome sequence of Schizosaccharomyces pombe.</title>
        <authorList>
            <person name="Wood V."/>
            <person name="Gwilliam R."/>
            <person name="Rajandream M.A."/>
            <person name="Lyne M.H."/>
            <person name="Lyne R."/>
            <person name="Stewart A."/>
            <person name="Sgouros J.G."/>
            <person name="Peat N."/>
            <person name="Hayles J."/>
            <person name="Baker S.G."/>
            <person name="Basham D."/>
            <person name="Bowman S."/>
            <person name="Brooks K."/>
            <person name="Brown D."/>
            <person name="Brown S."/>
            <person name="Chillingworth T."/>
            <person name="Churcher C.M."/>
            <person name="Collins M."/>
            <person name="Connor R."/>
            <person name="Cronin A."/>
            <person name="Davis P."/>
            <person name="Feltwell T."/>
            <person name="Fraser A."/>
            <person name="Gentles S."/>
            <person name="Goble A."/>
            <person name="Hamlin N."/>
            <person name="Harris D.E."/>
            <person name="Hidalgo J."/>
            <person name="Hodgson G."/>
            <person name="Holroyd S."/>
            <person name="Hornsby T."/>
            <person name="Howarth S."/>
            <person name="Huckle E.J."/>
            <person name="Hunt S."/>
            <person name="Jagels K."/>
            <person name="James K.D."/>
            <person name="Jones L."/>
            <person name="Jones M."/>
            <person name="Leather S."/>
            <person name="McDonald S."/>
            <person name="McLean J."/>
            <person name="Mooney P."/>
            <person name="Moule S."/>
            <person name="Mungall K.L."/>
            <person name="Murphy L.D."/>
            <person name="Niblett D."/>
            <person name="Odell C."/>
            <person name="Oliver K."/>
            <person name="O'Neil S."/>
            <person name="Pearson D."/>
            <person name="Quail M.A."/>
            <person name="Rabbinowitsch E."/>
            <person name="Rutherford K.M."/>
            <person name="Rutter S."/>
            <person name="Saunders D."/>
            <person name="Seeger K."/>
            <person name="Sharp S."/>
            <person name="Skelton J."/>
            <person name="Simmonds M.N."/>
            <person name="Squares R."/>
            <person name="Squares S."/>
            <person name="Stevens K."/>
            <person name="Taylor K."/>
            <person name="Taylor R.G."/>
            <person name="Tivey A."/>
            <person name="Walsh S.V."/>
            <person name="Warren T."/>
            <person name="Whitehead S."/>
            <person name="Woodward J.R."/>
            <person name="Volckaert G."/>
            <person name="Aert R."/>
            <person name="Robben J."/>
            <person name="Grymonprez B."/>
            <person name="Weltjens I."/>
            <person name="Vanstreels E."/>
            <person name="Rieger M."/>
            <person name="Schaefer M."/>
            <person name="Mueller-Auer S."/>
            <person name="Gabel C."/>
            <person name="Fuchs M."/>
            <person name="Duesterhoeft A."/>
            <person name="Fritzc C."/>
            <person name="Holzer E."/>
            <person name="Moestl D."/>
            <person name="Hilbert H."/>
            <person name="Borzym K."/>
            <person name="Langer I."/>
            <person name="Beck A."/>
            <person name="Lehrach H."/>
            <person name="Reinhardt R."/>
            <person name="Pohl T.M."/>
            <person name="Eger P."/>
            <person name="Zimmermann W."/>
            <person name="Wedler H."/>
            <person name="Wambutt R."/>
            <person name="Purnelle B."/>
            <person name="Goffeau A."/>
            <person name="Cadieu E."/>
            <person name="Dreano S."/>
            <person name="Gloux S."/>
            <person name="Lelaure V."/>
            <person name="Mottier S."/>
            <person name="Galibert F."/>
            <person name="Aves S.J."/>
            <person name="Xiang Z."/>
            <person name="Hunt C."/>
            <person name="Moore K."/>
            <person name="Hurst S.M."/>
            <person name="Lucas M."/>
            <person name="Rochet M."/>
            <person name="Gaillardin C."/>
            <person name="Tallada V.A."/>
            <person name="Garzon A."/>
            <person name="Thode G."/>
            <person name="Daga R.R."/>
            <person name="Cruzado L."/>
            <person name="Jimenez J."/>
            <person name="Sanchez M."/>
            <person name="del Rey F."/>
            <person name="Benito J."/>
            <person name="Dominguez A."/>
            <person name="Revuelta J.L."/>
            <person name="Moreno S."/>
            <person name="Armstrong J."/>
            <person name="Forsburg S.L."/>
            <person name="Cerutti L."/>
            <person name="Lowe T."/>
            <person name="McCombie W.R."/>
            <person name="Paulsen I."/>
            <person name="Potashkin J."/>
            <person name="Shpakovski G.V."/>
            <person name="Ussery D."/>
            <person name="Barrell B.G."/>
            <person name="Nurse P."/>
        </authorList>
    </citation>
    <scope>NUCLEOTIDE SEQUENCE [LARGE SCALE GENOMIC DNA]</scope>
    <source>
        <strain>972 / ATCC 24843</strain>
    </source>
</reference>
<reference key="2">
    <citation type="journal article" date="2011" name="Science">
        <title>Comparative functional genomics of the fission yeasts.</title>
        <authorList>
            <person name="Rhind N."/>
            <person name="Chen Z."/>
            <person name="Yassour M."/>
            <person name="Thompson D.A."/>
            <person name="Haas B.J."/>
            <person name="Habib N."/>
            <person name="Wapinski I."/>
            <person name="Roy S."/>
            <person name="Lin M.F."/>
            <person name="Heiman D.I."/>
            <person name="Young S.K."/>
            <person name="Furuya K."/>
            <person name="Guo Y."/>
            <person name="Pidoux A."/>
            <person name="Chen H.M."/>
            <person name="Robbertse B."/>
            <person name="Goldberg J.M."/>
            <person name="Aoki K."/>
            <person name="Bayne E.H."/>
            <person name="Berlin A.M."/>
            <person name="Desjardins C.A."/>
            <person name="Dobbs E."/>
            <person name="Dukaj L."/>
            <person name="Fan L."/>
            <person name="FitzGerald M.G."/>
            <person name="French C."/>
            <person name="Gujja S."/>
            <person name="Hansen K."/>
            <person name="Keifenheim D."/>
            <person name="Levin J.Z."/>
            <person name="Mosher R.A."/>
            <person name="Mueller C.A."/>
            <person name="Pfiffner J."/>
            <person name="Priest M."/>
            <person name="Russ C."/>
            <person name="Smialowska A."/>
            <person name="Swoboda P."/>
            <person name="Sykes S.M."/>
            <person name="Vaughn M."/>
            <person name="Vengrova S."/>
            <person name="Yoder R."/>
            <person name="Zeng Q."/>
            <person name="Allshire R."/>
            <person name="Baulcombe D."/>
            <person name="Birren B.W."/>
            <person name="Brown W."/>
            <person name="Ekwall K."/>
            <person name="Kellis M."/>
            <person name="Leatherwood J."/>
            <person name="Levin H."/>
            <person name="Margalit H."/>
            <person name="Martienssen R."/>
            <person name="Nieduszynski C.A."/>
            <person name="Spatafora J.W."/>
            <person name="Friedman N."/>
            <person name="Dalgaard J.Z."/>
            <person name="Baumann P."/>
            <person name="Niki H."/>
            <person name="Regev A."/>
            <person name="Nusbaum C."/>
        </authorList>
    </citation>
    <scope>REVISION OF GENE MODEL</scope>
</reference>
<reference key="3">
    <citation type="journal article" date="2006" name="Nat. Biotechnol.">
        <title>ORFeome cloning and global analysis of protein localization in the fission yeast Schizosaccharomyces pombe.</title>
        <authorList>
            <person name="Matsuyama A."/>
            <person name="Arai R."/>
            <person name="Yashiroda Y."/>
            <person name="Shirai A."/>
            <person name="Kamata A."/>
            <person name="Sekido S."/>
            <person name="Kobayashi Y."/>
            <person name="Hashimoto A."/>
            <person name="Hamamoto M."/>
            <person name="Hiraoka Y."/>
            <person name="Horinouchi S."/>
            <person name="Yoshida M."/>
        </authorList>
    </citation>
    <scope>SUBCELLULAR LOCATION [LARGE SCALE ANALYSIS]</scope>
</reference>
<name>YOE7_SCHPO</name>
<dbReference type="EMBL" id="CU329671">
    <property type="protein sequence ID" value="CAC19757.3"/>
    <property type="molecule type" value="Genomic_DNA"/>
</dbReference>
<dbReference type="RefSeq" id="XP_001713138.2">
    <property type="nucleotide sequence ID" value="XM_001713086.2"/>
</dbReference>
<dbReference type="FunCoup" id="Q9HDV3">
    <property type="interactions" value="7"/>
</dbReference>
<dbReference type="iPTMnet" id="Q9HDV3"/>
<dbReference type="PaxDb" id="4896-SPBP19A11.07c.1"/>
<dbReference type="EnsemblFungi" id="SPBP19A11.07c.1">
    <property type="protein sequence ID" value="SPBP19A11.07c.1:pep"/>
    <property type="gene ID" value="SPBP19A11.07c"/>
</dbReference>
<dbReference type="PomBase" id="SPBP19A11.07c"/>
<dbReference type="VEuPathDB" id="FungiDB:SPBP19A11.07c"/>
<dbReference type="eggNOG" id="KOG2226">
    <property type="taxonomic scope" value="Eukaryota"/>
</dbReference>
<dbReference type="HOGENOM" id="CLU_407183_0_0_1"/>
<dbReference type="InParanoid" id="Q9HDV3"/>
<dbReference type="OMA" id="PIYELNI"/>
<dbReference type="PRO" id="PR:Q9HDV3"/>
<dbReference type="Proteomes" id="UP000002485">
    <property type="component" value="Chromosome II"/>
</dbReference>
<dbReference type="GO" id="GO:0005829">
    <property type="term" value="C:cytosol"/>
    <property type="evidence" value="ECO:0007005"/>
    <property type="project" value="PomBase"/>
</dbReference>
<dbReference type="GO" id="GO:0005797">
    <property type="term" value="C:Golgi medial cisterna"/>
    <property type="evidence" value="ECO:0000318"/>
    <property type="project" value="GO_Central"/>
</dbReference>
<dbReference type="GO" id="GO:0000138">
    <property type="term" value="C:Golgi trans cisterna"/>
    <property type="evidence" value="ECO:0000318"/>
    <property type="project" value="GO_Central"/>
</dbReference>
<dbReference type="GO" id="GO:0016020">
    <property type="term" value="C:membrane"/>
    <property type="evidence" value="ECO:0000318"/>
    <property type="project" value="GO_Central"/>
</dbReference>
<dbReference type="GO" id="GO:0005634">
    <property type="term" value="C:nucleus"/>
    <property type="evidence" value="ECO:0007005"/>
    <property type="project" value="PomBase"/>
</dbReference>
<dbReference type="InterPro" id="IPR026705">
    <property type="entry name" value="Hid-1/Ecm30"/>
</dbReference>
<dbReference type="PANTHER" id="PTHR21575:SF14">
    <property type="entry name" value="HID-1 FAMILY PROTEIN P19A11.07C"/>
    <property type="match status" value="1"/>
</dbReference>
<dbReference type="PANTHER" id="PTHR21575">
    <property type="entry name" value="PROTEIN HID1"/>
    <property type="match status" value="1"/>
</dbReference>
<dbReference type="Pfam" id="PF12722">
    <property type="entry name" value="Hid1"/>
    <property type="match status" value="1"/>
</dbReference>
<protein>
    <recommendedName>
        <fullName>Hid-1 family protein P19A11.07c</fullName>
    </recommendedName>
    <alternativeName>
        <fullName>Down-regulated in multiple cancers 1 homolog 2</fullName>
    </alternativeName>
</protein>
<accession>Q9HDV3</accession>
<accession>Q9P7E5</accession>
<evidence type="ECO:0000269" key="1">
    <source>
    </source>
</evidence>
<evidence type="ECO:0000305" key="2"/>
<feature type="chain" id="PRO_0000116869" description="Hid-1 family protein P19A11.07c">
    <location>
        <begin position="1"/>
        <end position="688"/>
    </location>
</feature>
<sequence length="688" mass="79558">MGSAESKISFRHAILASLNTKPEREIYEFLFTCNLTENDVFSFILAQDIRICRDSNKFDNLAILLQVCVLNIVSIQNKFSEQYPLKKNALLNSFLILTRLLPYLYESTNSSNWVRTYFQKDFSQTVDDLKPLLSELGLNYEIELPNSFSNLTSLLSSTFQLCFQHEFTVSKYASSEESIWSAGIAIPEIAHPPSYDHRLHQSLLSCFLVVLLSNTLYDSIDELDFSVLNSIVSLDAKDIYIRVICSFVNTGFIDSTNWFLNSFNQRRNSLQLYSSWFIILILSDARIKENTHLYANGEGQHIKNHLLELFKKLHRTQDFLIIAESINKFLSNPLKKERQIITFMGDFKRCVVESLCFLFLLLTNQPRFTDELVNFKSSNEMMMNLLFIHVKYSGDTENSYMSSLAGYCLQQLVSHEKLVKAACHIDKSLISPSPSSQFPVFDTSVAIYVIQVLCTLENPSSIEYNIISNILFSIPTIPLKNASPIVELISYVMKPEFFMKSQQNASDCKKLLSSFLYFLINNFNDNLHIIELLQKDKRKFEPIIAWSETEFSEFFVTSNISQSALDNGLVDQAGLDEQKWYEKWFHDLNIPLLRKCLTLRTDKNPFIEQPDEPNVTKKIYRVTYTDALQRWNLVNIWRHIFKETVTLNSGISCPWYGTNVKLFTVREVRQPTILQSRSLGEFQGRLFS</sequence>
<comment type="subcellular location">
    <subcellularLocation>
        <location evidence="1">Cytoplasm</location>
    </subcellularLocation>
    <subcellularLocation>
        <location evidence="1">Nucleus</location>
    </subcellularLocation>
</comment>
<comment type="similarity">
    <text evidence="2">Belongs to the hid-1 family.</text>
</comment>
<organism>
    <name type="scientific">Schizosaccharomyces pombe (strain 972 / ATCC 24843)</name>
    <name type="common">Fission yeast</name>
    <dbReference type="NCBI Taxonomy" id="284812"/>
    <lineage>
        <taxon>Eukaryota</taxon>
        <taxon>Fungi</taxon>
        <taxon>Dikarya</taxon>
        <taxon>Ascomycota</taxon>
        <taxon>Taphrinomycotina</taxon>
        <taxon>Schizosaccharomycetes</taxon>
        <taxon>Schizosaccharomycetales</taxon>
        <taxon>Schizosaccharomycetaceae</taxon>
        <taxon>Schizosaccharomyces</taxon>
    </lineage>
</organism>
<proteinExistence type="inferred from homology"/>